<gene>
    <name evidence="1" type="primary">rpsJ</name>
    <name type="ordered locus">RSc3020</name>
    <name type="ORF">RS04737</name>
</gene>
<reference key="1">
    <citation type="journal article" date="2002" name="Nature">
        <title>Genome sequence of the plant pathogen Ralstonia solanacearum.</title>
        <authorList>
            <person name="Salanoubat M."/>
            <person name="Genin S."/>
            <person name="Artiguenave F."/>
            <person name="Gouzy J."/>
            <person name="Mangenot S."/>
            <person name="Arlat M."/>
            <person name="Billault A."/>
            <person name="Brottier P."/>
            <person name="Camus J.-C."/>
            <person name="Cattolico L."/>
            <person name="Chandler M."/>
            <person name="Choisne N."/>
            <person name="Claudel-Renard C."/>
            <person name="Cunnac S."/>
            <person name="Demange N."/>
            <person name="Gaspin C."/>
            <person name="Lavie M."/>
            <person name="Moisan A."/>
            <person name="Robert C."/>
            <person name="Saurin W."/>
            <person name="Schiex T."/>
            <person name="Siguier P."/>
            <person name="Thebault P."/>
            <person name="Whalen M."/>
            <person name="Wincker P."/>
            <person name="Levy M."/>
            <person name="Weissenbach J."/>
            <person name="Boucher C.A."/>
        </authorList>
    </citation>
    <scope>NUCLEOTIDE SEQUENCE [LARGE SCALE GENOMIC DNA]</scope>
    <source>
        <strain>ATCC BAA-1114 / GMI1000</strain>
    </source>
</reference>
<accession>Q8XV11</accession>
<dbReference type="EMBL" id="AL646052">
    <property type="protein sequence ID" value="CAD16729.1"/>
    <property type="molecule type" value="Genomic_DNA"/>
</dbReference>
<dbReference type="RefSeq" id="WP_003264110.1">
    <property type="nucleotide sequence ID" value="NC_003295.1"/>
</dbReference>
<dbReference type="SMR" id="Q8XV11"/>
<dbReference type="STRING" id="267608.RSc3020"/>
<dbReference type="EnsemblBacteria" id="CAD16729">
    <property type="protein sequence ID" value="CAD16729"/>
    <property type="gene ID" value="RSc3020"/>
</dbReference>
<dbReference type="GeneID" id="97319847"/>
<dbReference type="KEGG" id="rso:RSc3020"/>
<dbReference type="eggNOG" id="COG0051">
    <property type="taxonomic scope" value="Bacteria"/>
</dbReference>
<dbReference type="HOGENOM" id="CLU_122625_1_3_4"/>
<dbReference type="Proteomes" id="UP000001436">
    <property type="component" value="Chromosome"/>
</dbReference>
<dbReference type="GO" id="GO:1990904">
    <property type="term" value="C:ribonucleoprotein complex"/>
    <property type="evidence" value="ECO:0007669"/>
    <property type="project" value="UniProtKB-KW"/>
</dbReference>
<dbReference type="GO" id="GO:0005840">
    <property type="term" value="C:ribosome"/>
    <property type="evidence" value="ECO:0007669"/>
    <property type="project" value="UniProtKB-KW"/>
</dbReference>
<dbReference type="GO" id="GO:0003735">
    <property type="term" value="F:structural constituent of ribosome"/>
    <property type="evidence" value="ECO:0007669"/>
    <property type="project" value="InterPro"/>
</dbReference>
<dbReference type="GO" id="GO:0000049">
    <property type="term" value="F:tRNA binding"/>
    <property type="evidence" value="ECO:0007669"/>
    <property type="project" value="UniProtKB-UniRule"/>
</dbReference>
<dbReference type="GO" id="GO:0006412">
    <property type="term" value="P:translation"/>
    <property type="evidence" value="ECO:0007669"/>
    <property type="project" value="UniProtKB-UniRule"/>
</dbReference>
<dbReference type="FunFam" id="3.30.70.600:FF:000001">
    <property type="entry name" value="30S ribosomal protein S10"/>
    <property type="match status" value="1"/>
</dbReference>
<dbReference type="Gene3D" id="3.30.70.600">
    <property type="entry name" value="Ribosomal protein S10 domain"/>
    <property type="match status" value="1"/>
</dbReference>
<dbReference type="HAMAP" id="MF_00508">
    <property type="entry name" value="Ribosomal_uS10"/>
    <property type="match status" value="1"/>
</dbReference>
<dbReference type="InterPro" id="IPR001848">
    <property type="entry name" value="Ribosomal_uS10"/>
</dbReference>
<dbReference type="InterPro" id="IPR018268">
    <property type="entry name" value="Ribosomal_uS10_CS"/>
</dbReference>
<dbReference type="InterPro" id="IPR027486">
    <property type="entry name" value="Ribosomal_uS10_dom"/>
</dbReference>
<dbReference type="InterPro" id="IPR036838">
    <property type="entry name" value="Ribosomal_uS10_dom_sf"/>
</dbReference>
<dbReference type="NCBIfam" id="NF001861">
    <property type="entry name" value="PRK00596.1"/>
    <property type="match status" value="1"/>
</dbReference>
<dbReference type="NCBIfam" id="TIGR01049">
    <property type="entry name" value="rpsJ_bact"/>
    <property type="match status" value="1"/>
</dbReference>
<dbReference type="PANTHER" id="PTHR11700">
    <property type="entry name" value="30S RIBOSOMAL PROTEIN S10 FAMILY MEMBER"/>
    <property type="match status" value="1"/>
</dbReference>
<dbReference type="Pfam" id="PF00338">
    <property type="entry name" value="Ribosomal_S10"/>
    <property type="match status" value="1"/>
</dbReference>
<dbReference type="PRINTS" id="PR00971">
    <property type="entry name" value="RIBOSOMALS10"/>
</dbReference>
<dbReference type="SMART" id="SM01403">
    <property type="entry name" value="Ribosomal_S10"/>
    <property type="match status" value="1"/>
</dbReference>
<dbReference type="SUPFAM" id="SSF54999">
    <property type="entry name" value="Ribosomal protein S10"/>
    <property type="match status" value="1"/>
</dbReference>
<dbReference type="PROSITE" id="PS00361">
    <property type="entry name" value="RIBOSOMAL_S10"/>
    <property type="match status" value="1"/>
</dbReference>
<feature type="chain" id="PRO_0000146581" description="Small ribosomal subunit protein uS10">
    <location>
        <begin position="1"/>
        <end position="104"/>
    </location>
</feature>
<organism>
    <name type="scientific">Ralstonia nicotianae (strain ATCC BAA-1114 / GMI1000)</name>
    <name type="common">Ralstonia solanacearum</name>
    <dbReference type="NCBI Taxonomy" id="267608"/>
    <lineage>
        <taxon>Bacteria</taxon>
        <taxon>Pseudomonadati</taxon>
        <taxon>Pseudomonadota</taxon>
        <taxon>Betaproteobacteria</taxon>
        <taxon>Burkholderiales</taxon>
        <taxon>Burkholderiaceae</taxon>
        <taxon>Ralstonia</taxon>
        <taxon>Ralstonia solanacearum species complex</taxon>
    </lineage>
</organism>
<protein>
    <recommendedName>
        <fullName evidence="1">Small ribosomal subunit protein uS10</fullName>
    </recommendedName>
    <alternativeName>
        <fullName evidence="2">30S ribosomal protein S10</fullName>
    </alternativeName>
</protein>
<name>RS10_RALN1</name>
<keyword id="KW-1185">Reference proteome</keyword>
<keyword id="KW-0687">Ribonucleoprotein</keyword>
<keyword id="KW-0689">Ribosomal protein</keyword>
<sequence>MQQNQKIRIRLKAFDYRLIDQSAAEIVETAKRTGAIVKGPVPLPTRIQRFDVLRSPHVNKTSRDQFEIRTHQRLMDIVDPTDKTVDALMKLDLPAGVDVEIKLQ</sequence>
<evidence type="ECO:0000255" key="1">
    <source>
        <dbReference type="HAMAP-Rule" id="MF_00508"/>
    </source>
</evidence>
<evidence type="ECO:0000305" key="2"/>
<comment type="function">
    <text evidence="1">Involved in the binding of tRNA to the ribosomes.</text>
</comment>
<comment type="subunit">
    <text evidence="1">Part of the 30S ribosomal subunit.</text>
</comment>
<comment type="similarity">
    <text evidence="1">Belongs to the universal ribosomal protein uS10 family.</text>
</comment>
<proteinExistence type="inferred from homology"/>